<evidence type="ECO:0000250" key="1"/>
<evidence type="ECO:0000305" key="2"/>
<proteinExistence type="inferred from homology"/>
<gene>
    <name type="primary">rpl22</name>
</gene>
<accession>Q0G9S2</accession>
<dbReference type="EMBL" id="DQ898156">
    <property type="protein sequence ID" value="ABI32463.1"/>
    <property type="molecule type" value="Genomic_DNA"/>
</dbReference>
<dbReference type="RefSeq" id="YP_740157.1">
    <property type="nucleotide sequence ID" value="NC_008325.1"/>
</dbReference>
<dbReference type="SMR" id="Q0G9S2"/>
<dbReference type="GeneID" id="4266784"/>
<dbReference type="OMA" id="HSHITIR"/>
<dbReference type="GO" id="GO:0009507">
    <property type="term" value="C:chloroplast"/>
    <property type="evidence" value="ECO:0007669"/>
    <property type="project" value="UniProtKB-SubCell"/>
</dbReference>
<dbReference type="GO" id="GO:0015934">
    <property type="term" value="C:large ribosomal subunit"/>
    <property type="evidence" value="ECO:0007669"/>
    <property type="project" value="InterPro"/>
</dbReference>
<dbReference type="GO" id="GO:0019843">
    <property type="term" value="F:rRNA binding"/>
    <property type="evidence" value="ECO:0007669"/>
    <property type="project" value="UniProtKB-UniRule"/>
</dbReference>
<dbReference type="GO" id="GO:0003735">
    <property type="term" value="F:structural constituent of ribosome"/>
    <property type="evidence" value="ECO:0007669"/>
    <property type="project" value="InterPro"/>
</dbReference>
<dbReference type="GO" id="GO:0006412">
    <property type="term" value="P:translation"/>
    <property type="evidence" value="ECO:0007669"/>
    <property type="project" value="UniProtKB-UniRule"/>
</dbReference>
<dbReference type="CDD" id="cd00336">
    <property type="entry name" value="Ribosomal_L22"/>
    <property type="match status" value="1"/>
</dbReference>
<dbReference type="FunFam" id="3.90.470.10:FF:000006">
    <property type="entry name" value="50S ribosomal protein L22, chloroplastic"/>
    <property type="match status" value="1"/>
</dbReference>
<dbReference type="Gene3D" id="3.90.470.10">
    <property type="entry name" value="Ribosomal protein L22/L17"/>
    <property type="match status" value="1"/>
</dbReference>
<dbReference type="HAMAP" id="MF_01331_B">
    <property type="entry name" value="Ribosomal_uL22_B"/>
    <property type="match status" value="1"/>
</dbReference>
<dbReference type="InterPro" id="IPR001063">
    <property type="entry name" value="Ribosomal_uL22"/>
</dbReference>
<dbReference type="InterPro" id="IPR005727">
    <property type="entry name" value="Ribosomal_uL22_bac/chlpt-type"/>
</dbReference>
<dbReference type="InterPro" id="IPR047867">
    <property type="entry name" value="Ribosomal_uL22_bac/org-type"/>
</dbReference>
<dbReference type="InterPro" id="IPR036394">
    <property type="entry name" value="Ribosomal_uL22_sf"/>
</dbReference>
<dbReference type="NCBIfam" id="TIGR01044">
    <property type="entry name" value="rplV_bact"/>
    <property type="match status" value="1"/>
</dbReference>
<dbReference type="PANTHER" id="PTHR13501">
    <property type="entry name" value="CHLOROPLAST 50S RIBOSOMAL PROTEIN L22-RELATED"/>
    <property type="match status" value="1"/>
</dbReference>
<dbReference type="PANTHER" id="PTHR13501:SF10">
    <property type="entry name" value="LARGE RIBOSOMAL SUBUNIT PROTEIN UL22M"/>
    <property type="match status" value="1"/>
</dbReference>
<dbReference type="Pfam" id="PF00237">
    <property type="entry name" value="Ribosomal_L22"/>
    <property type="match status" value="1"/>
</dbReference>
<dbReference type="SUPFAM" id="SSF54843">
    <property type="entry name" value="Ribosomal protein L22"/>
    <property type="match status" value="1"/>
</dbReference>
<name>RK22_DAUCA</name>
<organism>
    <name type="scientific">Daucus carota</name>
    <name type="common">Wild carrot</name>
    <dbReference type="NCBI Taxonomy" id="4039"/>
    <lineage>
        <taxon>Eukaryota</taxon>
        <taxon>Viridiplantae</taxon>
        <taxon>Streptophyta</taxon>
        <taxon>Embryophyta</taxon>
        <taxon>Tracheophyta</taxon>
        <taxon>Spermatophyta</taxon>
        <taxon>Magnoliopsida</taxon>
        <taxon>eudicotyledons</taxon>
        <taxon>Gunneridae</taxon>
        <taxon>Pentapetalae</taxon>
        <taxon>asterids</taxon>
        <taxon>campanulids</taxon>
        <taxon>Apiales</taxon>
        <taxon>Apiaceae</taxon>
        <taxon>Apioideae</taxon>
        <taxon>Scandiceae</taxon>
        <taxon>Daucinae</taxon>
        <taxon>Daucus</taxon>
        <taxon>Daucus sect. Daucus</taxon>
    </lineage>
</organism>
<geneLocation type="chloroplast"/>
<comment type="function">
    <text evidence="1">This protein binds specifically to 23S rRNA.</text>
</comment>
<comment type="function">
    <text evidence="1">The globular domain of the protein is located near the polypeptide exit tunnel on the outside of the subunit, while an extended beta-hairpin is found that lines the wall of the exit tunnel in the center of the 70S ribosome.</text>
</comment>
<comment type="subunit">
    <text evidence="1">Part of the 50S ribosomal subunit.</text>
</comment>
<comment type="subcellular location">
    <subcellularLocation>
        <location>Plastid</location>
        <location>Chloroplast</location>
    </subcellularLocation>
</comment>
<comment type="similarity">
    <text evidence="2">Belongs to the universal ribosomal protein uL22 family.</text>
</comment>
<feature type="chain" id="PRO_0000276443" description="Large ribosomal subunit protein uL22c">
    <location>
        <begin position="1"/>
        <end position="165"/>
    </location>
</feature>
<protein>
    <recommendedName>
        <fullName evidence="2">Large ribosomal subunit protein uL22c</fullName>
    </recommendedName>
    <alternativeName>
        <fullName>50S ribosomal protein L22, chloroplastic</fullName>
    </alternativeName>
</protein>
<reference key="1">
    <citation type="journal article" date="2006" name="BMC Genomics">
        <title>Complete plastid genome sequence of Daucus carota: implications for biotechnology and phylogeny of angiosperms.</title>
        <authorList>
            <person name="Ruhlman T."/>
            <person name="Lee S.-B."/>
            <person name="Jansen R.K."/>
            <person name="Hostetler J.B."/>
            <person name="Tallon L.J."/>
            <person name="Town C.D."/>
            <person name="Daniell H."/>
        </authorList>
    </citation>
    <scope>NUCLEOTIDE SEQUENCE [LARGE SCALE GENOMIC DNA]</scope>
    <source>
        <strain>cv. Danvers Half-long</strain>
    </source>
</reference>
<sequence length="165" mass="18927">MLKKLTKIKTEVYALGQHISMSAHKARRVVDQIRGRSYEETLMILELMPYRACYPILKLVYSAAANANYNMDSNESNLVISKAEVSEGTATKKLKPRARGRSFTIKRPTCHIAIVVKDISLDEYQYLGVDFIDSFRCSKKLQSKKKYTAMSYHDMYTNGGIWDKK</sequence>
<keyword id="KW-0150">Chloroplast</keyword>
<keyword id="KW-0934">Plastid</keyword>
<keyword id="KW-0687">Ribonucleoprotein</keyword>
<keyword id="KW-0689">Ribosomal protein</keyword>
<keyword id="KW-0694">RNA-binding</keyword>
<keyword id="KW-0699">rRNA-binding</keyword>